<proteinExistence type="evidence at transcript level"/>
<protein>
    <recommendedName>
        <fullName>ADP-ribosylation factor-related protein 1</fullName>
        <shortName>ARF-related protein 1</shortName>
        <shortName>ARP</shortName>
    </recommendedName>
</protein>
<keyword id="KW-0007">Acetylation</keyword>
<keyword id="KW-0333">Golgi apparatus</keyword>
<keyword id="KW-0342">GTP-binding</keyword>
<keyword id="KW-0547">Nucleotide-binding</keyword>
<keyword id="KW-1185">Reference proteome</keyword>
<accession>Q63055</accession>
<comment type="function">
    <text evidence="3">Trans-Golgi-associated GTPase that regulates protein sorting. Controls the targeting of ARL1 and its effector to the trans-Golgi. Required for the lipidation of chylomicrons in the intestine and required for VLDL lipidation in the liver.</text>
</comment>
<comment type="subunit">
    <text evidence="2">Interacts with SYS1.</text>
</comment>
<comment type="subcellular location">
    <subcellularLocation>
        <location>Golgi apparatus</location>
    </subcellularLocation>
    <subcellularLocation>
        <location evidence="3">Golgi apparatus</location>
        <location evidence="3">trans-Golgi network</location>
    </subcellularLocation>
    <text evidence="3">Located in the trans-Golgi in the GTP-bound active state.</text>
</comment>
<comment type="tissue specificity">
    <text>Found in most tissues.</text>
</comment>
<comment type="similarity">
    <text evidence="4">Belongs to the small GTPase superfamily. Arf family.</text>
</comment>
<evidence type="ECO:0000250" key="1"/>
<evidence type="ECO:0000250" key="2">
    <source>
        <dbReference type="UniProtKB" id="Q13795"/>
    </source>
</evidence>
<evidence type="ECO:0000250" key="3">
    <source>
        <dbReference type="UniProtKB" id="Q8BXL7"/>
    </source>
</evidence>
<evidence type="ECO:0000305" key="4"/>
<gene>
    <name type="primary">Arfrp1</name>
    <name type="synonym">Arp1</name>
</gene>
<name>ARFRP_RAT</name>
<reference key="1">
    <citation type="journal article" date="1995" name="J. Biol. Chem.">
        <title>ARP is a plasma membrane-associated Ras-related GTPase with remote similarity to the family of ADP-ribosylation factors.</title>
        <authorList>
            <person name="Schuermann A."/>
            <person name="Massmann S."/>
            <person name="Joost H.-G."/>
        </authorList>
    </citation>
    <scope>NUCLEOTIDE SEQUENCE [MRNA]</scope>
    <source>
        <strain>Sprague-Dawley</strain>
        <tissue>Heart muscle</tissue>
    </source>
</reference>
<feature type="chain" id="PRO_0000207490" description="ADP-ribosylation factor-related protein 1">
    <location>
        <begin position="1"/>
        <end position="201"/>
    </location>
</feature>
<feature type="binding site" evidence="1">
    <location>
        <begin position="24"/>
        <end position="31"/>
    </location>
    <ligand>
        <name>GTP</name>
        <dbReference type="ChEBI" id="CHEBI:37565"/>
    </ligand>
</feature>
<feature type="binding site" evidence="1">
    <location>
        <begin position="75"/>
        <end position="79"/>
    </location>
    <ligand>
        <name>GTP</name>
        <dbReference type="ChEBI" id="CHEBI:37565"/>
    </ligand>
</feature>
<feature type="binding site" evidence="1">
    <location>
        <begin position="134"/>
        <end position="137"/>
    </location>
    <ligand>
        <name>GTP</name>
        <dbReference type="ChEBI" id="CHEBI:37565"/>
    </ligand>
</feature>
<feature type="modified residue" description="N-acetylmethionine" evidence="2">
    <location>
        <position position="1"/>
    </location>
</feature>
<dbReference type="EMBL" id="X78603">
    <property type="protein sequence ID" value="CAA55337.1"/>
    <property type="molecule type" value="mRNA"/>
</dbReference>
<dbReference type="RefSeq" id="NP_001416650.1">
    <property type="nucleotide sequence ID" value="NM_001429721.1"/>
</dbReference>
<dbReference type="RefSeq" id="NP_446432.1">
    <property type="nucleotide sequence ID" value="NM_053980.3"/>
</dbReference>
<dbReference type="RefSeq" id="XP_006235780.1">
    <property type="nucleotide sequence ID" value="XM_006235718.2"/>
</dbReference>
<dbReference type="SMR" id="Q63055"/>
<dbReference type="FunCoup" id="Q63055">
    <property type="interactions" value="2568"/>
</dbReference>
<dbReference type="STRING" id="10116.ENSRNOP00000019038"/>
<dbReference type="PhosphoSitePlus" id="Q63055"/>
<dbReference type="jPOST" id="Q63055"/>
<dbReference type="PaxDb" id="10116-ENSRNOP00000019038"/>
<dbReference type="GeneID" id="117051"/>
<dbReference type="KEGG" id="rno:117051"/>
<dbReference type="UCSC" id="RGD:621683">
    <property type="organism name" value="rat"/>
</dbReference>
<dbReference type="AGR" id="RGD:621683"/>
<dbReference type="CTD" id="10139"/>
<dbReference type="RGD" id="621683">
    <property type="gene designation" value="Arfrp1"/>
</dbReference>
<dbReference type="VEuPathDB" id="HostDB:ENSRNOG00000013992"/>
<dbReference type="eggNOG" id="KOG0076">
    <property type="taxonomic scope" value="Eukaryota"/>
</dbReference>
<dbReference type="HOGENOM" id="CLU_040729_7_2_1"/>
<dbReference type="InParanoid" id="Q63055"/>
<dbReference type="OrthoDB" id="414781at2759"/>
<dbReference type="PhylomeDB" id="Q63055"/>
<dbReference type="TreeFam" id="TF105788"/>
<dbReference type="Reactome" id="R-RNO-6811440">
    <property type="pathway name" value="Retrograde transport at the Trans-Golgi-Network"/>
</dbReference>
<dbReference type="PRO" id="PR:Q63055"/>
<dbReference type="Proteomes" id="UP000002494">
    <property type="component" value="Chromosome 3"/>
</dbReference>
<dbReference type="Bgee" id="ENSRNOG00000013992">
    <property type="expression patterns" value="Expressed in thymus and 20 other cell types or tissues"/>
</dbReference>
<dbReference type="GO" id="GO:0005829">
    <property type="term" value="C:cytosol"/>
    <property type="evidence" value="ECO:0007669"/>
    <property type="project" value="GOC"/>
</dbReference>
<dbReference type="GO" id="GO:0005794">
    <property type="term" value="C:Golgi apparatus"/>
    <property type="evidence" value="ECO:0000266"/>
    <property type="project" value="RGD"/>
</dbReference>
<dbReference type="GO" id="GO:0016020">
    <property type="term" value="C:membrane"/>
    <property type="evidence" value="ECO:0000266"/>
    <property type="project" value="RGD"/>
</dbReference>
<dbReference type="GO" id="GO:0005802">
    <property type="term" value="C:trans-Golgi network"/>
    <property type="evidence" value="ECO:0000266"/>
    <property type="project" value="RGD"/>
</dbReference>
<dbReference type="GO" id="GO:0005525">
    <property type="term" value="F:GTP binding"/>
    <property type="evidence" value="ECO:0000318"/>
    <property type="project" value="GO_Central"/>
</dbReference>
<dbReference type="GO" id="GO:0003924">
    <property type="term" value="F:GTPase activity"/>
    <property type="evidence" value="ECO:0000318"/>
    <property type="project" value="GO_Central"/>
</dbReference>
<dbReference type="GO" id="GO:0007369">
    <property type="term" value="P:gastrulation"/>
    <property type="evidence" value="ECO:0000266"/>
    <property type="project" value="RGD"/>
</dbReference>
<dbReference type="GO" id="GO:0043001">
    <property type="term" value="P:Golgi to plasma membrane protein transport"/>
    <property type="evidence" value="ECO:0000266"/>
    <property type="project" value="RGD"/>
</dbReference>
<dbReference type="GO" id="GO:0006886">
    <property type="term" value="P:intracellular protein transport"/>
    <property type="evidence" value="ECO:0000318"/>
    <property type="project" value="GO_Central"/>
</dbReference>
<dbReference type="GO" id="GO:0034067">
    <property type="term" value="P:protein localization to Golgi apparatus"/>
    <property type="evidence" value="ECO:0000266"/>
    <property type="project" value="RGD"/>
</dbReference>
<dbReference type="GO" id="GO:0042147">
    <property type="term" value="P:retrograde transport, endosome to Golgi"/>
    <property type="evidence" value="ECO:0000266"/>
    <property type="project" value="RGD"/>
</dbReference>
<dbReference type="CDD" id="cd04160">
    <property type="entry name" value="Arfrp1"/>
    <property type="match status" value="1"/>
</dbReference>
<dbReference type="FunFam" id="3.40.50.300:FF:000509">
    <property type="entry name" value="ADP-ribosylation factor-related protein 1"/>
    <property type="match status" value="1"/>
</dbReference>
<dbReference type="Gene3D" id="3.40.50.300">
    <property type="entry name" value="P-loop containing nucleotide triphosphate hydrolases"/>
    <property type="match status" value="1"/>
</dbReference>
<dbReference type="InterPro" id="IPR027417">
    <property type="entry name" value="P-loop_NTPase"/>
</dbReference>
<dbReference type="InterPro" id="IPR005225">
    <property type="entry name" value="Small_GTP-bd"/>
</dbReference>
<dbReference type="InterPro" id="IPR024156">
    <property type="entry name" value="Small_GTPase_ARF"/>
</dbReference>
<dbReference type="InterPro" id="IPR006689">
    <property type="entry name" value="Small_GTPase_ARF/SAR"/>
</dbReference>
<dbReference type="NCBIfam" id="TIGR00231">
    <property type="entry name" value="small_GTP"/>
    <property type="match status" value="1"/>
</dbReference>
<dbReference type="PANTHER" id="PTHR45909">
    <property type="entry name" value="ADP-RIBOSYLATION FACTOR-RELATED PROTEIN 1"/>
    <property type="match status" value="1"/>
</dbReference>
<dbReference type="PANTHER" id="PTHR45909:SF1">
    <property type="entry name" value="ADP-RIBOSYLATION FACTOR-RELATED PROTEIN 1"/>
    <property type="match status" value="1"/>
</dbReference>
<dbReference type="Pfam" id="PF00025">
    <property type="entry name" value="Arf"/>
    <property type="match status" value="1"/>
</dbReference>
<dbReference type="PRINTS" id="PR00449">
    <property type="entry name" value="RASTRNSFRMNG"/>
</dbReference>
<dbReference type="SMART" id="SM00177">
    <property type="entry name" value="ARF"/>
    <property type="match status" value="1"/>
</dbReference>
<dbReference type="SMART" id="SM00175">
    <property type="entry name" value="RAB"/>
    <property type="match status" value="1"/>
</dbReference>
<dbReference type="SMART" id="SM00178">
    <property type="entry name" value="SAR"/>
    <property type="match status" value="1"/>
</dbReference>
<dbReference type="SUPFAM" id="SSF52540">
    <property type="entry name" value="P-loop containing nucleoside triphosphate hydrolases"/>
    <property type="match status" value="1"/>
</dbReference>
<dbReference type="PROSITE" id="PS51417">
    <property type="entry name" value="ARF"/>
    <property type="match status" value="1"/>
</dbReference>
<sequence>MYTLLSGLYKYMFQKDEYCILILGLDNAGKTTFLEQSKTRFNKNYKGMSLSKITTTVGLNIGTVDVGKARLMFWDLGGQEELQSLWDKYYAECHGVIYVIDSTDEERLSESKEAFEKVVSSEALDGVPILVLANKQDVETCLSIPDIKTAFSDCTCKIGRRDCLTQACSALTGKGVREGIEWMVKCVVRNVHRPPRQRDIT</sequence>
<organism>
    <name type="scientific">Rattus norvegicus</name>
    <name type="common">Rat</name>
    <dbReference type="NCBI Taxonomy" id="10116"/>
    <lineage>
        <taxon>Eukaryota</taxon>
        <taxon>Metazoa</taxon>
        <taxon>Chordata</taxon>
        <taxon>Craniata</taxon>
        <taxon>Vertebrata</taxon>
        <taxon>Euteleostomi</taxon>
        <taxon>Mammalia</taxon>
        <taxon>Eutheria</taxon>
        <taxon>Euarchontoglires</taxon>
        <taxon>Glires</taxon>
        <taxon>Rodentia</taxon>
        <taxon>Myomorpha</taxon>
        <taxon>Muroidea</taxon>
        <taxon>Muridae</taxon>
        <taxon>Murinae</taxon>
        <taxon>Rattus</taxon>
    </lineage>
</organism>